<evidence type="ECO:0000255" key="1">
    <source>
        <dbReference type="HAMAP-Rule" id="MF_00984"/>
    </source>
</evidence>
<evidence type="ECO:0000256" key="2">
    <source>
        <dbReference type="SAM" id="MobiDB-lite"/>
    </source>
</evidence>
<keyword id="KW-0227">DNA damage</keyword>
<keyword id="KW-0233">DNA recombination</keyword>
<keyword id="KW-0234">DNA repair</keyword>
<keyword id="KW-0235">DNA replication</keyword>
<keyword id="KW-0238">DNA-binding</keyword>
<organism>
    <name type="scientific">Bordetella bronchiseptica (strain ATCC BAA-588 / NCTC 13252 / RB50)</name>
    <name type="common">Alcaligenes bronchisepticus</name>
    <dbReference type="NCBI Taxonomy" id="257310"/>
    <lineage>
        <taxon>Bacteria</taxon>
        <taxon>Pseudomonadati</taxon>
        <taxon>Pseudomonadota</taxon>
        <taxon>Betaproteobacteria</taxon>
        <taxon>Burkholderiales</taxon>
        <taxon>Alcaligenaceae</taxon>
        <taxon>Bordetella</taxon>
    </lineage>
</organism>
<sequence length="166" mass="18100">MASVNKVILVGNLGRDPEVRYSPDGAAICNVSIATTSQWKDKASGERREETEWHRVVMYNRLAEIAGEYLKKGRSVYIEGRLKTRKWQDKDTGADRYSTEIVADQMQMLGGRDSGGDSGGGYGGGYDDAPRQQRAPAQRPAAAPQRPAPQAAPAANLADMDDDIPF</sequence>
<name>SSB_BORBR</name>
<accession>P66847</accession>
<accession>P59929</accession>
<accession>Q7VT88</accession>
<accession>Q7WR79</accession>
<reference key="1">
    <citation type="journal article" date="2003" name="Nat. Genet.">
        <title>Comparative analysis of the genome sequences of Bordetella pertussis, Bordetella parapertussis and Bordetella bronchiseptica.</title>
        <authorList>
            <person name="Parkhill J."/>
            <person name="Sebaihia M."/>
            <person name="Preston A."/>
            <person name="Murphy L.D."/>
            <person name="Thomson N.R."/>
            <person name="Harris D.E."/>
            <person name="Holden M.T.G."/>
            <person name="Churcher C.M."/>
            <person name="Bentley S.D."/>
            <person name="Mungall K.L."/>
            <person name="Cerdeno-Tarraga A.-M."/>
            <person name="Temple L."/>
            <person name="James K.D."/>
            <person name="Harris B."/>
            <person name="Quail M.A."/>
            <person name="Achtman M."/>
            <person name="Atkin R."/>
            <person name="Baker S."/>
            <person name="Basham D."/>
            <person name="Bason N."/>
            <person name="Cherevach I."/>
            <person name="Chillingworth T."/>
            <person name="Collins M."/>
            <person name="Cronin A."/>
            <person name="Davis P."/>
            <person name="Doggett J."/>
            <person name="Feltwell T."/>
            <person name="Goble A."/>
            <person name="Hamlin N."/>
            <person name="Hauser H."/>
            <person name="Holroyd S."/>
            <person name="Jagels K."/>
            <person name="Leather S."/>
            <person name="Moule S."/>
            <person name="Norberczak H."/>
            <person name="O'Neil S."/>
            <person name="Ormond D."/>
            <person name="Price C."/>
            <person name="Rabbinowitsch E."/>
            <person name="Rutter S."/>
            <person name="Sanders M."/>
            <person name="Saunders D."/>
            <person name="Seeger K."/>
            <person name="Sharp S."/>
            <person name="Simmonds M."/>
            <person name="Skelton J."/>
            <person name="Squares R."/>
            <person name="Squares S."/>
            <person name="Stevens K."/>
            <person name="Unwin L."/>
            <person name="Whitehead S."/>
            <person name="Barrell B.G."/>
            <person name="Maskell D.J."/>
        </authorList>
    </citation>
    <scope>NUCLEOTIDE SEQUENCE [LARGE SCALE GENOMIC DNA]</scope>
    <source>
        <strain>ATCC BAA-588 / NCTC 13252 / RB50</strain>
    </source>
</reference>
<dbReference type="EMBL" id="BX640437">
    <property type="protein sequence ID" value="CAE30579.1"/>
    <property type="molecule type" value="Genomic_DNA"/>
</dbReference>
<dbReference type="RefSeq" id="WP_003806953.1">
    <property type="nucleotide sequence ID" value="NC_002927.3"/>
</dbReference>
<dbReference type="SMR" id="P66847"/>
<dbReference type="GeneID" id="69600110"/>
<dbReference type="KEGG" id="bbr:BB0077"/>
<dbReference type="eggNOG" id="COG0629">
    <property type="taxonomic scope" value="Bacteria"/>
</dbReference>
<dbReference type="HOGENOM" id="CLU_078758_0_1_4"/>
<dbReference type="Proteomes" id="UP000001027">
    <property type="component" value="Chromosome"/>
</dbReference>
<dbReference type="GO" id="GO:0009295">
    <property type="term" value="C:nucleoid"/>
    <property type="evidence" value="ECO:0007669"/>
    <property type="project" value="TreeGrafter"/>
</dbReference>
<dbReference type="GO" id="GO:0003697">
    <property type="term" value="F:single-stranded DNA binding"/>
    <property type="evidence" value="ECO:0007669"/>
    <property type="project" value="UniProtKB-UniRule"/>
</dbReference>
<dbReference type="GO" id="GO:0006310">
    <property type="term" value="P:DNA recombination"/>
    <property type="evidence" value="ECO:0007669"/>
    <property type="project" value="UniProtKB-UniRule"/>
</dbReference>
<dbReference type="GO" id="GO:0006281">
    <property type="term" value="P:DNA repair"/>
    <property type="evidence" value="ECO:0007669"/>
    <property type="project" value="UniProtKB-UniRule"/>
</dbReference>
<dbReference type="GO" id="GO:0006260">
    <property type="term" value="P:DNA replication"/>
    <property type="evidence" value="ECO:0007669"/>
    <property type="project" value="UniProtKB-UniRule"/>
</dbReference>
<dbReference type="CDD" id="cd04496">
    <property type="entry name" value="SSB_OBF"/>
    <property type="match status" value="1"/>
</dbReference>
<dbReference type="Gene3D" id="2.40.50.140">
    <property type="entry name" value="Nucleic acid-binding proteins"/>
    <property type="match status" value="1"/>
</dbReference>
<dbReference type="HAMAP" id="MF_00984">
    <property type="entry name" value="SSB"/>
    <property type="match status" value="1"/>
</dbReference>
<dbReference type="InterPro" id="IPR012340">
    <property type="entry name" value="NA-bd_OB-fold"/>
</dbReference>
<dbReference type="InterPro" id="IPR000424">
    <property type="entry name" value="Primosome_PriB/ssb"/>
</dbReference>
<dbReference type="InterPro" id="IPR011344">
    <property type="entry name" value="ssDNA-bd"/>
</dbReference>
<dbReference type="NCBIfam" id="TIGR00621">
    <property type="entry name" value="ssb"/>
    <property type="match status" value="1"/>
</dbReference>
<dbReference type="PANTHER" id="PTHR10302">
    <property type="entry name" value="SINGLE-STRANDED DNA-BINDING PROTEIN"/>
    <property type="match status" value="1"/>
</dbReference>
<dbReference type="PANTHER" id="PTHR10302:SF27">
    <property type="entry name" value="SINGLE-STRANDED DNA-BINDING PROTEIN"/>
    <property type="match status" value="1"/>
</dbReference>
<dbReference type="Pfam" id="PF00436">
    <property type="entry name" value="SSB"/>
    <property type="match status" value="1"/>
</dbReference>
<dbReference type="SUPFAM" id="SSF50249">
    <property type="entry name" value="Nucleic acid-binding proteins"/>
    <property type="match status" value="1"/>
</dbReference>
<dbReference type="PROSITE" id="PS50935">
    <property type="entry name" value="SSB"/>
    <property type="match status" value="1"/>
</dbReference>
<comment type="function">
    <text evidence="1">Plays an important role in DNA replication, recombination and repair. Binds to ssDNA and to an array of partner proteins to recruit them to their sites of action during DNA metabolism.</text>
</comment>
<comment type="subunit">
    <text evidence="1">Homotetramer.</text>
</comment>
<feature type="chain" id="PRO_0000096011" description="Single-stranded DNA-binding protein">
    <location>
        <begin position="1"/>
        <end position="166"/>
    </location>
</feature>
<feature type="domain" description="SSB" evidence="1">
    <location>
        <begin position="4"/>
        <end position="110"/>
    </location>
</feature>
<feature type="region of interest" description="Disordered" evidence="2">
    <location>
        <begin position="108"/>
        <end position="166"/>
    </location>
</feature>
<feature type="short sequence motif" description="Important for interaction with partner proteins" evidence="1">
    <location>
        <begin position="161"/>
        <end position="166"/>
    </location>
</feature>
<feature type="compositionally biased region" description="Gly residues" evidence="2">
    <location>
        <begin position="112"/>
        <end position="126"/>
    </location>
</feature>
<feature type="compositionally biased region" description="Low complexity" evidence="2">
    <location>
        <begin position="132"/>
        <end position="155"/>
    </location>
</feature>
<proteinExistence type="inferred from homology"/>
<protein>
    <recommendedName>
        <fullName evidence="1">Single-stranded DNA-binding protein</fullName>
        <shortName evidence="1">SSB</shortName>
    </recommendedName>
</protein>
<gene>
    <name type="primary">ssb</name>
    <name type="ordered locus">BB0077</name>
</gene>